<sequence>MMENYKHTTVLLDEAVNGLNIRPDGIYIDGTFGRGGHSRLILSQLGEEGRLLAIDRDPQAIAVAKTIDDPRFSIIHGPFSALGEYVAERDLIGKIDGILLDLGVSSPQLDDAERGFSFMRDGPLDMRMDPTRGQSAAEWLQTAEEADIAWVLKTYGEERFAKRIARAIVERNREQPMTRTKELAEVVAAATPVKDKFKHPATRTFQAVRIWVNSELEEIEQALKSSLNVLAPGGRLSIISFHSLEDRIVKRFMRENSRGPQVPAGLPMTEEQLKKLGGRQLRALGKLMPGEEEVAENPRARSSVLRIAERTNA</sequence>
<protein>
    <recommendedName>
        <fullName evidence="1">Ribosomal RNA small subunit methyltransferase H</fullName>
        <ecNumber evidence="1">2.1.1.199</ecNumber>
    </recommendedName>
    <alternativeName>
        <fullName evidence="1">16S rRNA m(4)C1402 methyltransferase</fullName>
    </alternativeName>
    <alternativeName>
        <fullName evidence="1">rRNA (cytosine-N(4)-)-methyltransferase RsmH</fullName>
    </alternativeName>
</protein>
<name>RSMH_ECOBW</name>
<gene>
    <name evidence="1" type="primary">rsmH</name>
    <name type="synonym">mraW</name>
    <name type="ordered locus">BWG_0077</name>
</gene>
<reference key="1">
    <citation type="journal article" date="2009" name="J. Bacteriol.">
        <title>Genomic sequencing reveals regulatory mutations and recombinational events in the widely used MC4100 lineage of Escherichia coli K-12.</title>
        <authorList>
            <person name="Ferenci T."/>
            <person name="Zhou Z."/>
            <person name="Betteridge T."/>
            <person name="Ren Y."/>
            <person name="Liu Y."/>
            <person name="Feng L."/>
            <person name="Reeves P.R."/>
            <person name="Wang L."/>
        </authorList>
    </citation>
    <scope>NUCLEOTIDE SEQUENCE [LARGE SCALE GENOMIC DNA]</scope>
    <source>
        <strain>K12 / MC4100 / BW2952</strain>
    </source>
</reference>
<feature type="chain" id="PRO_0000386871" description="Ribosomal RNA small subunit methyltransferase H">
    <location>
        <begin position="1"/>
        <end position="313"/>
    </location>
</feature>
<feature type="binding site" evidence="1">
    <location>
        <begin position="35"/>
        <end position="37"/>
    </location>
    <ligand>
        <name>S-adenosyl-L-methionine</name>
        <dbReference type="ChEBI" id="CHEBI:59789"/>
    </ligand>
</feature>
<feature type="binding site" evidence="1">
    <location>
        <position position="55"/>
    </location>
    <ligand>
        <name>S-adenosyl-L-methionine</name>
        <dbReference type="ChEBI" id="CHEBI:59789"/>
    </ligand>
</feature>
<feature type="binding site" evidence="1">
    <location>
        <position position="79"/>
    </location>
    <ligand>
        <name>S-adenosyl-L-methionine</name>
        <dbReference type="ChEBI" id="CHEBI:59789"/>
    </ligand>
</feature>
<feature type="binding site" evidence="1">
    <location>
        <position position="101"/>
    </location>
    <ligand>
        <name>S-adenosyl-L-methionine</name>
        <dbReference type="ChEBI" id="CHEBI:59789"/>
    </ligand>
</feature>
<feature type="binding site" evidence="1">
    <location>
        <position position="108"/>
    </location>
    <ligand>
        <name>S-adenosyl-L-methionine</name>
        <dbReference type="ChEBI" id="CHEBI:59789"/>
    </ligand>
</feature>
<proteinExistence type="inferred from homology"/>
<keyword id="KW-0963">Cytoplasm</keyword>
<keyword id="KW-0489">Methyltransferase</keyword>
<keyword id="KW-0698">rRNA processing</keyword>
<keyword id="KW-0949">S-adenosyl-L-methionine</keyword>
<keyword id="KW-0808">Transferase</keyword>
<organism>
    <name type="scientific">Escherichia coli (strain K12 / MC4100 / BW2952)</name>
    <dbReference type="NCBI Taxonomy" id="595496"/>
    <lineage>
        <taxon>Bacteria</taxon>
        <taxon>Pseudomonadati</taxon>
        <taxon>Pseudomonadota</taxon>
        <taxon>Gammaproteobacteria</taxon>
        <taxon>Enterobacterales</taxon>
        <taxon>Enterobacteriaceae</taxon>
        <taxon>Escherichia</taxon>
    </lineage>
</organism>
<evidence type="ECO:0000255" key="1">
    <source>
        <dbReference type="HAMAP-Rule" id="MF_01007"/>
    </source>
</evidence>
<comment type="function">
    <text evidence="1">Specifically methylates the N4 position of cytidine in position 1402 (C1402) of 16S rRNA.</text>
</comment>
<comment type="catalytic activity">
    <reaction evidence="1">
        <text>cytidine(1402) in 16S rRNA + S-adenosyl-L-methionine = N(4)-methylcytidine(1402) in 16S rRNA + S-adenosyl-L-homocysteine + H(+)</text>
        <dbReference type="Rhea" id="RHEA:42928"/>
        <dbReference type="Rhea" id="RHEA-COMP:10286"/>
        <dbReference type="Rhea" id="RHEA-COMP:10287"/>
        <dbReference type="ChEBI" id="CHEBI:15378"/>
        <dbReference type="ChEBI" id="CHEBI:57856"/>
        <dbReference type="ChEBI" id="CHEBI:59789"/>
        <dbReference type="ChEBI" id="CHEBI:74506"/>
        <dbReference type="ChEBI" id="CHEBI:82748"/>
        <dbReference type="EC" id="2.1.1.199"/>
    </reaction>
</comment>
<comment type="subcellular location">
    <subcellularLocation>
        <location evidence="1">Cytoplasm</location>
    </subcellularLocation>
</comment>
<comment type="similarity">
    <text evidence="1">Belongs to the methyltransferase superfamily. RsmH family.</text>
</comment>
<dbReference type="EC" id="2.1.1.199" evidence="1"/>
<dbReference type="EMBL" id="CP001396">
    <property type="protein sequence ID" value="ACR65505.1"/>
    <property type="molecule type" value="Genomic_DNA"/>
</dbReference>
<dbReference type="RefSeq" id="WP_000970479.1">
    <property type="nucleotide sequence ID" value="NC_012759.1"/>
</dbReference>
<dbReference type="SMR" id="C4ZQ04"/>
<dbReference type="GeneID" id="86862592"/>
<dbReference type="KEGG" id="ebw:BWG_0077"/>
<dbReference type="HOGENOM" id="CLU_038422_2_0_6"/>
<dbReference type="GO" id="GO:0005737">
    <property type="term" value="C:cytoplasm"/>
    <property type="evidence" value="ECO:0007669"/>
    <property type="project" value="UniProtKB-SubCell"/>
</dbReference>
<dbReference type="GO" id="GO:0071424">
    <property type="term" value="F:rRNA (cytosine-N4-)-methyltransferase activity"/>
    <property type="evidence" value="ECO:0007669"/>
    <property type="project" value="UniProtKB-UniRule"/>
</dbReference>
<dbReference type="GO" id="GO:0070475">
    <property type="term" value="P:rRNA base methylation"/>
    <property type="evidence" value="ECO:0007669"/>
    <property type="project" value="UniProtKB-UniRule"/>
</dbReference>
<dbReference type="FunFam" id="1.10.150.170:FF:000001">
    <property type="entry name" value="Ribosomal RNA small subunit methyltransferase H"/>
    <property type="match status" value="1"/>
</dbReference>
<dbReference type="Gene3D" id="1.10.150.170">
    <property type="entry name" value="Putative methyltransferase TM0872, insert domain"/>
    <property type="match status" value="1"/>
</dbReference>
<dbReference type="Gene3D" id="3.40.50.150">
    <property type="entry name" value="Vaccinia Virus protein VP39"/>
    <property type="match status" value="1"/>
</dbReference>
<dbReference type="HAMAP" id="MF_01007">
    <property type="entry name" value="16SrRNA_methyltr_H"/>
    <property type="match status" value="1"/>
</dbReference>
<dbReference type="InterPro" id="IPR002903">
    <property type="entry name" value="RsmH"/>
</dbReference>
<dbReference type="InterPro" id="IPR023397">
    <property type="entry name" value="SAM-dep_MeTrfase_MraW_recog"/>
</dbReference>
<dbReference type="InterPro" id="IPR029063">
    <property type="entry name" value="SAM-dependent_MTases_sf"/>
</dbReference>
<dbReference type="NCBIfam" id="TIGR00006">
    <property type="entry name" value="16S rRNA (cytosine(1402)-N(4))-methyltransferase RsmH"/>
    <property type="match status" value="1"/>
</dbReference>
<dbReference type="PANTHER" id="PTHR11265:SF0">
    <property type="entry name" value="12S RRNA N4-METHYLCYTIDINE METHYLTRANSFERASE"/>
    <property type="match status" value="1"/>
</dbReference>
<dbReference type="PANTHER" id="PTHR11265">
    <property type="entry name" value="S-ADENOSYL-METHYLTRANSFERASE MRAW"/>
    <property type="match status" value="1"/>
</dbReference>
<dbReference type="Pfam" id="PF01795">
    <property type="entry name" value="Methyltransf_5"/>
    <property type="match status" value="1"/>
</dbReference>
<dbReference type="PIRSF" id="PIRSF004486">
    <property type="entry name" value="MraW"/>
    <property type="match status" value="1"/>
</dbReference>
<dbReference type="SUPFAM" id="SSF81799">
    <property type="entry name" value="Putative methyltransferase TM0872, insert domain"/>
    <property type="match status" value="1"/>
</dbReference>
<dbReference type="SUPFAM" id="SSF53335">
    <property type="entry name" value="S-adenosyl-L-methionine-dependent methyltransferases"/>
    <property type="match status" value="1"/>
</dbReference>
<accession>C4ZQ04</accession>